<name>CAPSD_TASV2</name>
<gene>
    <name type="ORF">ORF2</name>
</gene>
<evidence type="ECO:0000250" key="1">
    <source>
        <dbReference type="UniProtKB" id="Q9IFX1"/>
    </source>
</evidence>
<evidence type="ECO:0000256" key="2">
    <source>
        <dbReference type="SAM" id="MobiDB-lite"/>
    </source>
</evidence>
<evidence type="ECO:0000269" key="3">
    <source>
    </source>
</evidence>
<evidence type="ECO:0000305" key="4"/>
<evidence type="ECO:0007744" key="5">
    <source>
        <dbReference type="PDB" id="3TS3"/>
    </source>
</evidence>
<evidence type="ECO:0007829" key="6">
    <source>
        <dbReference type="PDB" id="3TS3"/>
    </source>
</evidence>
<organism>
    <name type="scientific">Turkey astrovirus 2</name>
    <name type="common">TAstV-2</name>
    <dbReference type="NCBI Taxonomy" id="246343"/>
    <lineage>
        <taxon>Viruses</taxon>
        <taxon>Riboviria</taxon>
        <taxon>Orthornavirae</taxon>
        <taxon>Pisuviricota</taxon>
        <taxon>Stelpaviricetes</taxon>
        <taxon>Stellavirales</taxon>
        <taxon>Astroviridae</taxon>
        <taxon>Avastrovirus</taxon>
        <taxon>Avastrovirus 3</taxon>
    </lineage>
</organism>
<protein>
    <recommendedName>
        <fullName>Capsid polyprotein VP90</fullName>
    </recommendedName>
</protein>
<feature type="chain" id="PRO_0000320243" description="Capsid polyprotein VP90">
    <location>
        <begin position="1"/>
        <end position="724"/>
    </location>
</feature>
<feature type="region of interest" description="Disordered" evidence="2">
    <location>
        <begin position="1"/>
        <end position="39"/>
    </location>
</feature>
<feature type="region of interest" description="P2 globular domain" evidence="3">
    <location>
        <begin position="423"/>
        <end position="629"/>
    </location>
</feature>
<feature type="region of interest" description="Acidic" evidence="3">
    <location>
        <begin position="630"/>
        <end position="724"/>
    </location>
</feature>
<feature type="region of interest" description="Disordered" evidence="2">
    <location>
        <begin position="700"/>
        <end position="724"/>
    </location>
</feature>
<feature type="compositionally biased region" description="Basic residues" evidence="2">
    <location>
        <begin position="13"/>
        <end position="39"/>
    </location>
</feature>
<feature type="helix" evidence="6">
    <location>
        <begin position="428"/>
        <end position="430"/>
    </location>
</feature>
<feature type="strand" evidence="6">
    <location>
        <begin position="437"/>
        <end position="441"/>
    </location>
</feature>
<feature type="strand" evidence="6">
    <location>
        <begin position="455"/>
        <end position="459"/>
    </location>
</feature>
<feature type="helix" evidence="6">
    <location>
        <begin position="466"/>
        <end position="468"/>
    </location>
</feature>
<feature type="strand" evidence="6">
    <location>
        <begin position="469"/>
        <end position="476"/>
    </location>
</feature>
<feature type="strand" evidence="6">
    <location>
        <begin position="478"/>
        <end position="481"/>
    </location>
</feature>
<feature type="strand" evidence="6">
    <location>
        <begin position="489"/>
        <end position="492"/>
    </location>
</feature>
<feature type="strand" evidence="6">
    <location>
        <begin position="496"/>
        <end position="503"/>
    </location>
</feature>
<feature type="turn" evidence="6">
    <location>
        <begin position="505"/>
        <end position="507"/>
    </location>
</feature>
<feature type="strand" evidence="6">
    <location>
        <begin position="509"/>
        <end position="512"/>
    </location>
</feature>
<feature type="helix" evidence="6">
    <location>
        <begin position="514"/>
        <end position="516"/>
    </location>
</feature>
<feature type="strand" evidence="6">
    <location>
        <begin position="520"/>
        <end position="523"/>
    </location>
</feature>
<feature type="helix" evidence="6">
    <location>
        <begin position="524"/>
        <end position="527"/>
    </location>
</feature>
<feature type="turn" evidence="6">
    <location>
        <begin position="528"/>
        <end position="532"/>
    </location>
</feature>
<feature type="strand" evidence="6">
    <location>
        <begin position="539"/>
        <end position="542"/>
    </location>
</feature>
<feature type="helix" evidence="6">
    <location>
        <begin position="544"/>
        <end position="546"/>
    </location>
</feature>
<feature type="helix" evidence="6">
    <location>
        <begin position="551"/>
        <end position="557"/>
    </location>
</feature>
<feature type="strand" evidence="6">
    <location>
        <begin position="564"/>
        <end position="570"/>
    </location>
</feature>
<feature type="strand" evidence="6">
    <location>
        <begin position="575"/>
        <end position="581"/>
    </location>
</feature>
<feature type="turn" evidence="6">
    <location>
        <begin position="582"/>
        <end position="585"/>
    </location>
</feature>
<feature type="strand" evidence="6">
    <location>
        <begin position="586"/>
        <end position="595"/>
    </location>
</feature>
<feature type="strand" evidence="6">
    <location>
        <begin position="609"/>
        <end position="611"/>
    </location>
</feature>
<feature type="helix" evidence="6">
    <location>
        <begin position="618"/>
        <end position="624"/>
    </location>
</feature>
<sequence>MAAMADKVVVKKTTTRRRGRSNSRSRSRSRSRSRTKKTVKIIEKKPEKSILKKIDQAERRDAKQLRRIRKKVQGPPVNSRMTTVVTLGQITGNKDNTLERKHKCFLNPLLMKSQETGQTATPLSVRASQYNLWKLSRLHVRLIPLAGKANILGSVVFLDLEQEANTAGPESVDTIKARPHVEVPIGSKTVWKVHPRSALGPRQGWWNVDPGDSPTDSLGPALNMWTYLQTVNALQSAGGTQTPYTSALFLVEVLVTYEFSNYGPKPALSQMVSDSFPPASGSTATLKNTSDGAVAIQLSGAIARKMEEVEPKGRRSNAQTSGVGEVFWAVSTEVVNTVADAIPGWGWLLKGGWFVLRKIFGAANDQNGTYLIYSSVADAQGDNRIYTSVKQTQLTSSRINLVQLTQPNVNQAAVGGSVGAANSIYLPLPQADDQYTPYFVYNFQGERVSTTETGVFCLAAIPAATTSSRYNNQITTPSIGYRNASGTGTSFLLDAASWWNILDVTQTGVLFGQPRLGVGVMQTMKTLKQHIKDYTEPAIQKYYPGTTNLDEQLKQRLNLAEGDPVISMGDTNGRRAALFYRTSDEKYILFFSTTEDPGAQYQNLKMLYFWNWSYSDTKQQFLDHLRTVQFANLDDSQPAPYDSDDDDLSDVTSLFEQADLGDETDFKFNMSIQTSKHLEEEKNYWKNQCERMMMEKALSGTSQPLVRFEKAGPRADQSSASGHS</sequence>
<keyword id="KW-0002">3D-structure</keyword>
<keyword id="KW-0167">Capsid protein</keyword>
<keyword id="KW-0945">Host-virus interaction</keyword>
<keyword id="KW-1087">Inhibition of host complement factors by virus</keyword>
<keyword id="KW-1140">T=1 icosahedral capsid protein</keyword>
<keyword id="KW-0899">Viral immunoevasion</keyword>
<keyword id="KW-0946">Virion</keyword>
<reference key="1">
    <citation type="journal article" date="2000" name="J. Virol.">
        <title>Molecular characterization of an avian astrovirus.</title>
        <authorList>
            <person name="Koci M.D."/>
            <person name="Seal B.S."/>
            <person name="Schultz-Cherry S."/>
        </authorList>
    </citation>
    <scope>NUCLEOTIDE SEQUENCE [GENOMIC RNA]</scope>
</reference>
<reference evidence="5" key="2">
    <citation type="journal article" date="2013" name="J. Virol.">
        <title>Crystal structure of the avian astrovirus capsid spike.</title>
        <authorList>
            <person name="DuBois R.M."/>
            <person name="Freiden P."/>
            <person name="Marvin S."/>
            <person name="Reddivari M."/>
            <person name="Heath R.J."/>
            <person name="White S.W."/>
            <person name="Schultz-Cherry S."/>
        </authorList>
    </citation>
    <scope>X-RAY CRYSTALLOGRAPHY (1.49 ANGSTROMS) OF 423-630</scope>
    <scope>DOMAIN</scope>
</reference>
<organismHost>
    <name type="scientific">Meleagris gallopavo</name>
    <name type="common">Wild turkey</name>
    <dbReference type="NCBI Taxonomy" id="9103"/>
</organismHost>
<accession>Q9Q3G5</accession>
<accession>J9PBU5</accession>
<comment type="function">
    <text evidence="1">Self-assembles to form an icosahedral T=3 immature capsid.</text>
</comment>
<comment type="subcellular location">
    <subcellularLocation>
        <location evidence="1">Virion</location>
    </subcellularLocation>
    <text evidence="1">Immature capsid.</text>
</comment>
<comment type="domain">
    <text evidence="1">Contains the P2 globular region.</text>
</comment>
<comment type="PTM">
    <text evidence="1">Specific enzymatic cleavages by the host yield mature proteins.</text>
</comment>
<comment type="similarity">
    <text evidence="4">Belongs to the astroviridae capsid polyprotein family.</text>
</comment>
<proteinExistence type="evidence at protein level"/>
<dbReference type="EMBL" id="AF206663">
    <property type="protein sequence ID" value="AAF18464.1"/>
    <property type="molecule type" value="Genomic_RNA"/>
</dbReference>
<dbReference type="RefSeq" id="NP_987088.1">
    <property type="nucleotide sequence ID" value="NC_005790.1"/>
</dbReference>
<dbReference type="PDB" id="3TS3">
    <property type="method" value="X-ray"/>
    <property type="resolution" value="1.49 A"/>
    <property type="chains" value="A/B/C/D=423-630"/>
</dbReference>
<dbReference type="PDBsum" id="3TS3"/>
<dbReference type="SMR" id="Q9Q3G5"/>
<dbReference type="KEGG" id="vg:2943320"/>
<dbReference type="OrthoDB" id="10228at10239"/>
<dbReference type="EvolutionaryTrace" id="Q9Q3G5"/>
<dbReference type="Proteomes" id="UP000007235">
    <property type="component" value="Segment"/>
</dbReference>
<dbReference type="GO" id="GO:0039615">
    <property type="term" value="C:T=1 icosahedral viral capsid"/>
    <property type="evidence" value="ECO:0007669"/>
    <property type="project" value="UniProtKB-KW"/>
</dbReference>
<dbReference type="GO" id="GO:0042784">
    <property type="term" value="P:symbiont-mediated suppression of host complement activation"/>
    <property type="evidence" value="ECO:0007669"/>
    <property type="project" value="UniProtKB-KW"/>
</dbReference>
<dbReference type="Gene3D" id="2.60.120.20">
    <property type="match status" value="1"/>
</dbReference>
<dbReference type="InterPro" id="IPR004337">
    <property type="entry name" value="Astro_capsid_N"/>
</dbReference>
<dbReference type="InterPro" id="IPR029053">
    <property type="entry name" value="Viral_coat"/>
</dbReference>
<dbReference type="InterPro" id="IPR032268">
    <property type="entry name" value="VP90_C"/>
</dbReference>
<dbReference type="Pfam" id="PF03115">
    <property type="entry name" value="Astro_capsid_N"/>
    <property type="match status" value="1"/>
</dbReference>
<dbReference type="Pfam" id="PF16580">
    <property type="entry name" value="Astro_capsid_p2"/>
    <property type="match status" value="1"/>
</dbReference>